<dbReference type="EMBL" id="U00089">
    <property type="protein sequence ID" value="AAB95973.1"/>
    <property type="molecule type" value="Genomic_DNA"/>
</dbReference>
<dbReference type="PIR" id="S73651">
    <property type="entry name" value="S73651"/>
</dbReference>
<dbReference type="RefSeq" id="NP_110205.1">
    <property type="nucleotide sequence ID" value="NC_000912.1"/>
</dbReference>
<dbReference type="RefSeq" id="WP_010874873.1">
    <property type="nucleotide sequence ID" value="NZ_OU342337.1"/>
</dbReference>
<dbReference type="SMR" id="P75270"/>
<dbReference type="IntAct" id="P75270">
    <property type="interactions" value="1"/>
</dbReference>
<dbReference type="STRING" id="272634.MPN_517"/>
<dbReference type="EnsemblBacteria" id="AAB95973">
    <property type="protein sequence ID" value="AAB95973"/>
    <property type="gene ID" value="MPN_517"/>
</dbReference>
<dbReference type="KEGG" id="mpn:MPN_517"/>
<dbReference type="PATRIC" id="fig|272634.6.peg.571"/>
<dbReference type="HOGENOM" id="CLU_055322_4_1_14"/>
<dbReference type="OrthoDB" id="9806724at2"/>
<dbReference type="BioCyc" id="MPNE272634:G1GJ3-848-MONOMER"/>
<dbReference type="Proteomes" id="UP000000808">
    <property type="component" value="Chromosome"/>
</dbReference>
<dbReference type="GO" id="GO:0005829">
    <property type="term" value="C:cytosol"/>
    <property type="evidence" value="ECO:0007669"/>
    <property type="project" value="TreeGrafter"/>
</dbReference>
<dbReference type="GO" id="GO:0005524">
    <property type="term" value="F:ATP binding"/>
    <property type="evidence" value="ECO:0007669"/>
    <property type="project" value="UniProtKB-KW"/>
</dbReference>
<dbReference type="GO" id="GO:0010181">
    <property type="term" value="F:FMN binding"/>
    <property type="evidence" value="ECO:0007669"/>
    <property type="project" value="TreeGrafter"/>
</dbReference>
<dbReference type="GO" id="GO:0016491">
    <property type="term" value="F:oxidoreductase activity"/>
    <property type="evidence" value="ECO:0007669"/>
    <property type="project" value="InterPro"/>
</dbReference>
<dbReference type="Gene3D" id="3.40.50.360">
    <property type="match status" value="1"/>
</dbReference>
<dbReference type="InterPro" id="IPR029039">
    <property type="entry name" value="Flavoprotein-like_sf"/>
</dbReference>
<dbReference type="InterPro" id="IPR005025">
    <property type="entry name" value="FMN_Rdtase-like_dom"/>
</dbReference>
<dbReference type="InterPro" id="IPR050712">
    <property type="entry name" value="NAD(P)H-dep_reductase"/>
</dbReference>
<dbReference type="PANTHER" id="PTHR30543">
    <property type="entry name" value="CHROMATE REDUCTASE"/>
    <property type="match status" value="1"/>
</dbReference>
<dbReference type="PANTHER" id="PTHR30543:SF21">
    <property type="entry name" value="NAD(P)H-DEPENDENT FMN REDUCTASE LOT6"/>
    <property type="match status" value="1"/>
</dbReference>
<dbReference type="Pfam" id="PF03358">
    <property type="entry name" value="FMN_red"/>
    <property type="match status" value="1"/>
</dbReference>
<dbReference type="SUPFAM" id="SSF52218">
    <property type="entry name" value="Flavoproteins"/>
    <property type="match status" value="1"/>
</dbReference>
<reference key="1">
    <citation type="journal article" date="1996" name="Nucleic Acids Res.">
        <title>Complete sequence analysis of the genome of the bacterium Mycoplasma pneumoniae.</title>
        <authorList>
            <person name="Himmelreich R."/>
            <person name="Hilbert H."/>
            <person name="Plagens H."/>
            <person name="Pirkl E."/>
            <person name="Li B.-C."/>
            <person name="Herrmann R."/>
        </authorList>
    </citation>
    <scope>NUCLEOTIDE SEQUENCE [LARGE SCALE GENOMIC DNA]</scope>
    <source>
        <strain>ATCC 29342 / M129 / Subtype 1</strain>
    </source>
</reference>
<accession>P75270</accession>
<keyword id="KW-0067">ATP-binding</keyword>
<keyword id="KW-0547">Nucleotide-binding</keyword>
<keyword id="KW-1185">Reference proteome</keyword>
<feature type="chain" id="PRO_0000210550" description="Uncharacterized protein MG342 homolog">
    <location>
        <begin position="1"/>
        <end position="166"/>
    </location>
</feature>
<feature type="binding site" evidence="1">
    <location>
        <begin position="117"/>
        <end position="124"/>
    </location>
    <ligand>
        <name>ATP</name>
        <dbReference type="ChEBI" id="CHEBI:30616"/>
    </ligand>
</feature>
<evidence type="ECO:0000255" key="1"/>
<protein>
    <recommendedName>
        <fullName>Uncharacterized protein MG342 homolog</fullName>
    </recommendedName>
</protein>
<proteinExistence type="predicted"/>
<organism>
    <name type="scientific">Mycoplasma pneumoniae (strain ATCC 29342 / M129 / Subtype 1)</name>
    <name type="common">Mycoplasmoides pneumoniae</name>
    <dbReference type="NCBI Taxonomy" id="272634"/>
    <lineage>
        <taxon>Bacteria</taxon>
        <taxon>Bacillati</taxon>
        <taxon>Mycoplasmatota</taxon>
        <taxon>Mycoplasmoidales</taxon>
        <taxon>Mycoplasmoidaceae</taxon>
        <taxon>Mycoplasmoides</taxon>
    </lineage>
</organism>
<name>Y517_MYCPN</name>
<gene>
    <name type="ordered locus">MPN_517</name>
    <name type="ORF">G12_orf166a</name>
    <name type="ORF">MP325</name>
</gene>
<sequence>MSTKPLILLLANSKNSINRKFAKALEQQLNAELIELVDYQVDFYCEDLEKDHFPEKIKSLVRKLHDHKTLIFVTPEHNGFVPAFAKNTIDWMTRDTQYGKNQFLKELDGIICCVTPAAKSGGKTVLELLTKFFSFSGLNVKGAVLVNGYHDGFDFQPFITDVQKLI</sequence>